<feature type="chain" id="PRO_0000230979" description="Transaldolase">
    <location>
        <begin position="1"/>
        <end position="322"/>
    </location>
</feature>
<feature type="active site" description="Schiff-base intermediate with substrate" evidence="2">
    <location>
        <position position="136"/>
    </location>
</feature>
<keyword id="KW-0963">Cytoplasm</keyword>
<keyword id="KW-0570">Pentose shunt</keyword>
<keyword id="KW-1185">Reference proteome</keyword>
<keyword id="KW-0704">Schiff base</keyword>
<keyword id="KW-0808">Transferase</keyword>
<gene>
    <name evidence="2" type="primary">tal</name>
    <name type="ordered locus">XOO3649</name>
</gene>
<name>TAL_XANOR</name>
<sequence>MTASPSKLAQLRELSVVVADTGDYDAIKRLQPVDCTTNPTLVKKALDLPVYADLLERELTWGRAHGGDDRTTTVDEVADRLTIGVGVKLSALVPGRVSTEVDADLAHDTQATIAKARKFVAMYAERGVPKDKILIKIAATWEGIEAARQLQLEGIDCNLTLIFNRAQALACAEANVFLISPFVGRILDYYVAQGQTPASIDEDPGVVFVRTVYNAFKQRGSSTVVMGASFRSTAQIEALAGCDRLTISPDLLEKLDAEHGELPRKLSPGNANNAQITPIDSDSFASGLAADPMATEKLASGIDTFAKDLHALRKTIADKLAG</sequence>
<reference key="1">
    <citation type="journal article" date="2005" name="Nucleic Acids Res.">
        <title>The genome sequence of Xanthomonas oryzae pathovar oryzae KACC10331, the bacterial blight pathogen of rice.</title>
        <authorList>
            <person name="Lee B.-M."/>
            <person name="Park Y.-J."/>
            <person name="Park D.-S."/>
            <person name="Kang H.-W."/>
            <person name="Kim J.-G."/>
            <person name="Song E.-S."/>
            <person name="Park I.-C."/>
            <person name="Yoon U.-H."/>
            <person name="Hahn J.-H."/>
            <person name="Koo B.-S."/>
            <person name="Lee G.-B."/>
            <person name="Kim H."/>
            <person name="Park H.-S."/>
            <person name="Yoon K.-O."/>
            <person name="Kim J.-H."/>
            <person name="Jung C.-H."/>
            <person name="Koh N.-H."/>
            <person name="Seo J.-S."/>
            <person name="Go S.-J."/>
        </authorList>
    </citation>
    <scope>NUCLEOTIDE SEQUENCE [LARGE SCALE GENOMIC DNA]</scope>
    <source>
        <strain>KACC10331 / KXO85</strain>
    </source>
</reference>
<evidence type="ECO:0000250" key="1"/>
<evidence type="ECO:0000255" key="2">
    <source>
        <dbReference type="HAMAP-Rule" id="MF_00492"/>
    </source>
</evidence>
<comment type="function">
    <text evidence="2">Transaldolase is important for the balance of metabolites in the pentose-phosphate pathway.</text>
</comment>
<comment type="catalytic activity">
    <reaction evidence="2">
        <text>D-sedoheptulose 7-phosphate + D-glyceraldehyde 3-phosphate = D-erythrose 4-phosphate + beta-D-fructose 6-phosphate</text>
        <dbReference type="Rhea" id="RHEA:17053"/>
        <dbReference type="ChEBI" id="CHEBI:16897"/>
        <dbReference type="ChEBI" id="CHEBI:57483"/>
        <dbReference type="ChEBI" id="CHEBI:57634"/>
        <dbReference type="ChEBI" id="CHEBI:59776"/>
        <dbReference type="EC" id="2.2.1.2"/>
    </reaction>
</comment>
<comment type="pathway">
    <text evidence="2">Carbohydrate degradation; pentose phosphate pathway; D-glyceraldehyde 3-phosphate and beta-D-fructose 6-phosphate from D-ribose 5-phosphate and D-xylulose 5-phosphate (non-oxidative stage): step 2/3.</text>
</comment>
<comment type="subunit">
    <text evidence="1">Homodimer.</text>
</comment>
<comment type="subcellular location">
    <subcellularLocation>
        <location evidence="2">Cytoplasm</location>
    </subcellularLocation>
</comment>
<comment type="similarity">
    <text evidence="2">Belongs to the transaldolase family. Type 1 subfamily.</text>
</comment>
<protein>
    <recommendedName>
        <fullName evidence="2">Transaldolase</fullName>
        <ecNumber evidence="2">2.2.1.2</ecNumber>
    </recommendedName>
</protein>
<accession>Q5GWL8</accession>
<dbReference type="EC" id="2.2.1.2" evidence="2"/>
<dbReference type="EMBL" id="AE013598">
    <property type="protein sequence ID" value="AAW76903.1"/>
    <property type="molecule type" value="Genomic_DNA"/>
</dbReference>
<dbReference type="SMR" id="Q5GWL8"/>
<dbReference type="STRING" id="291331.XOO3649"/>
<dbReference type="KEGG" id="xoo:XOO3649"/>
<dbReference type="PATRIC" id="fig|291331.8.peg.4044"/>
<dbReference type="HOGENOM" id="CLU_047470_0_1_6"/>
<dbReference type="UniPathway" id="UPA00115">
    <property type="reaction ID" value="UER00414"/>
</dbReference>
<dbReference type="Proteomes" id="UP000006735">
    <property type="component" value="Chromosome"/>
</dbReference>
<dbReference type="GO" id="GO:0005829">
    <property type="term" value="C:cytosol"/>
    <property type="evidence" value="ECO:0007669"/>
    <property type="project" value="TreeGrafter"/>
</dbReference>
<dbReference type="GO" id="GO:0004801">
    <property type="term" value="F:transaldolase activity"/>
    <property type="evidence" value="ECO:0000250"/>
    <property type="project" value="UniProtKB"/>
</dbReference>
<dbReference type="GO" id="GO:0005975">
    <property type="term" value="P:carbohydrate metabolic process"/>
    <property type="evidence" value="ECO:0007669"/>
    <property type="project" value="InterPro"/>
</dbReference>
<dbReference type="GO" id="GO:0006098">
    <property type="term" value="P:pentose-phosphate shunt"/>
    <property type="evidence" value="ECO:0007669"/>
    <property type="project" value="UniProtKB-UniRule"/>
</dbReference>
<dbReference type="CDD" id="cd00957">
    <property type="entry name" value="Transaldolase_TalAB"/>
    <property type="match status" value="1"/>
</dbReference>
<dbReference type="FunFam" id="3.20.20.70:FF:000226">
    <property type="entry name" value="Transaldolase"/>
    <property type="match status" value="1"/>
</dbReference>
<dbReference type="Gene3D" id="3.20.20.70">
    <property type="entry name" value="Aldolase class I"/>
    <property type="match status" value="1"/>
</dbReference>
<dbReference type="HAMAP" id="MF_00492">
    <property type="entry name" value="Transaldolase_1"/>
    <property type="match status" value="1"/>
</dbReference>
<dbReference type="InterPro" id="IPR013785">
    <property type="entry name" value="Aldolase_TIM"/>
</dbReference>
<dbReference type="InterPro" id="IPR001585">
    <property type="entry name" value="TAL/FSA"/>
</dbReference>
<dbReference type="InterPro" id="IPR004730">
    <property type="entry name" value="Transaldolase_1"/>
</dbReference>
<dbReference type="InterPro" id="IPR018225">
    <property type="entry name" value="Transaldolase_AS"/>
</dbReference>
<dbReference type="PANTHER" id="PTHR10683">
    <property type="entry name" value="TRANSALDOLASE"/>
    <property type="match status" value="1"/>
</dbReference>
<dbReference type="PANTHER" id="PTHR10683:SF18">
    <property type="entry name" value="TRANSALDOLASE"/>
    <property type="match status" value="1"/>
</dbReference>
<dbReference type="Pfam" id="PF00923">
    <property type="entry name" value="TAL_FSA"/>
    <property type="match status" value="1"/>
</dbReference>
<dbReference type="SUPFAM" id="SSF51569">
    <property type="entry name" value="Aldolase"/>
    <property type="match status" value="1"/>
</dbReference>
<dbReference type="PROSITE" id="PS01054">
    <property type="entry name" value="TRANSALDOLASE_1"/>
    <property type="match status" value="1"/>
</dbReference>
<dbReference type="PROSITE" id="PS00958">
    <property type="entry name" value="TRANSALDOLASE_2"/>
    <property type="match status" value="1"/>
</dbReference>
<proteinExistence type="inferred from homology"/>
<organism>
    <name type="scientific">Xanthomonas oryzae pv. oryzae (strain KACC10331 / KXO85)</name>
    <dbReference type="NCBI Taxonomy" id="291331"/>
    <lineage>
        <taxon>Bacteria</taxon>
        <taxon>Pseudomonadati</taxon>
        <taxon>Pseudomonadota</taxon>
        <taxon>Gammaproteobacteria</taxon>
        <taxon>Lysobacterales</taxon>
        <taxon>Lysobacteraceae</taxon>
        <taxon>Xanthomonas</taxon>
    </lineage>
</organism>